<feature type="chain" id="PRO_1000129990" description="Chaperonin GroEL">
    <location>
        <begin position="1"/>
        <end position="550"/>
    </location>
</feature>
<feature type="region of interest" description="Disordered" evidence="2">
    <location>
        <begin position="526"/>
        <end position="550"/>
    </location>
</feature>
<feature type="compositionally biased region" description="Gly residues" evidence="2">
    <location>
        <begin position="537"/>
        <end position="550"/>
    </location>
</feature>
<feature type="binding site" evidence="1">
    <location>
        <begin position="30"/>
        <end position="33"/>
    </location>
    <ligand>
        <name>ATP</name>
        <dbReference type="ChEBI" id="CHEBI:30616"/>
    </ligand>
</feature>
<feature type="binding site" evidence="1">
    <location>
        <position position="51"/>
    </location>
    <ligand>
        <name>ATP</name>
        <dbReference type="ChEBI" id="CHEBI:30616"/>
    </ligand>
</feature>
<feature type="binding site" evidence="1">
    <location>
        <begin position="87"/>
        <end position="91"/>
    </location>
    <ligand>
        <name>ATP</name>
        <dbReference type="ChEBI" id="CHEBI:30616"/>
    </ligand>
</feature>
<feature type="binding site" evidence="1">
    <location>
        <position position="415"/>
    </location>
    <ligand>
        <name>ATP</name>
        <dbReference type="ChEBI" id="CHEBI:30616"/>
    </ligand>
</feature>
<feature type="binding site" evidence="1">
    <location>
        <position position="496"/>
    </location>
    <ligand>
        <name>ATP</name>
        <dbReference type="ChEBI" id="CHEBI:30616"/>
    </ligand>
</feature>
<reference key="1">
    <citation type="submission" date="2008-06" db="EMBL/GenBank/DDBJ databases">
        <title>Complete sequence of Chloroherpeton thalassium ATCC 35110.</title>
        <authorList>
            <consortium name="US DOE Joint Genome Institute"/>
            <person name="Lucas S."/>
            <person name="Copeland A."/>
            <person name="Lapidus A."/>
            <person name="Glavina del Rio T."/>
            <person name="Dalin E."/>
            <person name="Tice H."/>
            <person name="Bruce D."/>
            <person name="Goodwin L."/>
            <person name="Pitluck S."/>
            <person name="Schmutz J."/>
            <person name="Larimer F."/>
            <person name="Land M."/>
            <person name="Hauser L."/>
            <person name="Kyrpides N."/>
            <person name="Mikhailova N."/>
            <person name="Liu Z."/>
            <person name="Li T."/>
            <person name="Zhao F."/>
            <person name="Overmann J."/>
            <person name="Bryant D.A."/>
            <person name="Richardson P."/>
        </authorList>
    </citation>
    <scope>NUCLEOTIDE SEQUENCE [LARGE SCALE GENOMIC DNA]</scope>
    <source>
        <strain>ATCC 35110 / GB-78</strain>
    </source>
</reference>
<accession>B3QSM9</accession>
<dbReference type="EC" id="5.6.1.7" evidence="1"/>
<dbReference type="EMBL" id="CP001100">
    <property type="protein sequence ID" value="ACF14076.1"/>
    <property type="molecule type" value="Genomic_DNA"/>
</dbReference>
<dbReference type="RefSeq" id="WP_012500160.1">
    <property type="nucleotide sequence ID" value="NC_011026.1"/>
</dbReference>
<dbReference type="SMR" id="B3QSM9"/>
<dbReference type="STRING" id="517418.Ctha_1618"/>
<dbReference type="KEGG" id="cts:Ctha_1618"/>
<dbReference type="eggNOG" id="COG0459">
    <property type="taxonomic scope" value="Bacteria"/>
</dbReference>
<dbReference type="HOGENOM" id="CLU_016503_3_0_10"/>
<dbReference type="OrthoDB" id="9766614at2"/>
<dbReference type="Proteomes" id="UP000001208">
    <property type="component" value="Chromosome"/>
</dbReference>
<dbReference type="GO" id="GO:0005737">
    <property type="term" value="C:cytoplasm"/>
    <property type="evidence" value="ECO:0007669"/>
    <property type="project" value="UniProtKB-SubCell"/>
</dbReference>
<dbReference type="GO" id="GO:0005524">
    <property type="term" value="F:ATP binding"/>
    <property type="evidence" value="ECO:0007669"/>
    <property type="project" value="UniProtKB-UniRule"/>
</dbReference>
<dbReference type="GO" id="GO:0140662">
    <property type="term" value="F:ATP-dependent protein folding chaperone"/>
    <property type="evidence" value="ECO:0007669"/>
    <property type="project" value="InterPro"/>
</dbReference>
<dbReference type="GO" id="GO:0016853">
    <property type="term" value="F:isomerase activity"/>
    <property type="evidence" value="ECO:0007669"/>
    <property type="project" value="UniProtKB-KW"/>
</dbReference>
<dbReference type="GO" id="GO:0051082">
    <property type="term" value="F:unfolded protein binding"/>
    <property type="evidence" value="ECO:0007669"/>
    <property type="project" value="UniProtKB-UniRule"/>
</dbReference>
<dbReference type="GO" id="GO:0042026">
    <property type="term" value="P:protein refolding"/>
    <property type="evidence" value="ECO:0007669"/>
    <property type="project" value="UniProtKB-UniRule"/>
</dbReference>
<dbReference type="CDD" id="cd03344">
    <property type="entry name" value="GroEL"/>
    <property type="match status" value="1"/>
</dbReference>
<dbReference type="FunFam" id="1.10.560.10:FF:000001">
    <property type="entry name" value="60 kDa chaperonin"/>
    <property type="match status" value="1"/>
</dbReference>
<dbReference type="FunFam" id="3.50.7.10:FF:000001">
    <property type="entry name" value="60 kDa chaperonin"/>
    <property type="match status" value="1"/>
</dbReference>
<dbReference type="Gene3D" id="3.50.7.10">
    <property type="entry name" value="GroEL"/>
    <property type="match status" value="1"/>
</dbReference>
<dbReference type="Gene3D" id="1.10.560.10">
    <property type="entry name" value="GroEL-like equatorial domain"/>
    <property type="match status" value="1"/>
</dbReference>
<dbReference type="Gene3D" id="3.30.260.10">
    <property type="entry name" value="TCP-1-like chaperonin intermediate domain"/>
    <property type="match status" value="1"/>
</dbReference>
<dbReference type="HAMAP" id="MF_00600">
    <property type="entry name" value="CH60"/>
    <property type="match status" value="1"/>
</dbReference>
<dbReference type="InterPro" id="IPR018370">
    <property type="entry name" value="Chaperonin_Cpn60_CS"/>
</dbReference>
<dbReference type="InterPro" id="IPR001844">
    <property type="entry name" value="Cpn60/GroEL"/>
</dbReference>
<dbReference type="InterPro" id="IPR002423">
    <property type="entry name" value="Cpn60/GroEL/TCP-1"/>
</dbReference>
<dbReference type="InterPro" id="IPR027409">
    <property type="entry name" value="GroEL-like_apical_dom_sf"/>
</dbReference>
<dbReference type="InterPro" id="IPR027413">
    <property type="entry name" value="GROEL-like_equatorial_sf"/>
</dbReference>
<dbReference type="InterPro" id="IPR027410">
    <property type="entry name" value="TCP-1-like_intermed_sf"/>
</dbReference>
<dbReference type="NCBIfam" id="TIGR02348">
    <property type="entry name" value="GroEL"/>
    <property type="match status" value="1"/>
</dbReference>
<dbReference type="NCBIfam" id="NF000592">
    <property type="entry name" value="PRK00013.1"/>
    <property type="match status" value="1"/>
</dbReference>
<dbReference type="NCBIfam" id="NF009487">
    <property type="entry name" value="PRK12849.1"/>
    <property type="match status" value="1"/>
</dbReference>
<dbReference type="NCBIfam" id="NF009488">
    <property type="entry name" value="PRK12850.1"/>
    <property type="match status" value="1"/>
</dbReference>
<dbReference type="NCBIfam" id="NF009489">
    <property type="entry name" value="PRK12851.1"/>
    <property type="match status" value="1"/>
</dbReference>
<dbReference type="PANTHER" id="PTHR45633">
    <property type="entry name" value="60 KDA HEAT SHOCK PROTEIN, MITOCHONDRIAL"/>
    <property type="match status" value="1"/>
</dbReference>
<dbReference type="Pfam" id="PF00118">
    <property type="entry name" value="Cpn60_TCP1"/>
    <property type="match status" value="1"/>
</dbReference>
<dbReference type="PRINTS" id="PR00298">
    <property type="entry name" value="CHAPERONIN60"/>
</dbReference>
<dbReference type="SUPFAM" id="SSF52029">
    <property type="entry name" value="GroEL apical domain-like"/>
    <property type="match status" value="1"/>
</dbReference>
<dbReference type="SUPFAM" id="SSF48592">
    <property type="entry name" value="GroEL equatorial domain-like"/>
    <property type="match status" value="1"/>
</dbReference>
<dbReference type="SUPFAM" id="SSF54849">
    <property type="entry name" value="GroEL-intermediate domain like"/>
    <property type="match status" value="1"/>
</dbReference>
<dbReference type="PROSITE" id="PS00296">
    <property type="entry name" value="CHAPERONINS_CPN60"/>
    <property type="match status" value="1"/>
</dbReference>
<sequence length="550" mass="58545">MAAKEIHFDAEGRNALKRGVDKLADAVKVTLGPAGRNVIIDKKFGAPTVTKDGVTVAKEVELEDPVENMGAQMVREVASKTSDVAGDGTTTATVLAQAIYREGLKNVTAGANPMDLKRGIDKAVTGVIIELKKISRPIADKKEIAQVGCISANNDSEIGDLIAEAMEKVGKDGVITVEEAKGTETELKVVEGMQFDRGYLSPYFVTNADSMEAVLDEPYILIYDKKISNMKELLPILEKTAQSGRPLLIIAEEIEGEALATLVVNKLRGTLKVCAVKAPGFGDRRKAMLEDIAILTGGTVISEEKGYKLENATIGYLGQAGSVTIDKDNSTIVEGKGTEDDIKARINEIKNQVEKATSDYDKEKLQERLAKLSGGVAVLNIGATTEVEMKEKKARVEDALHATRAAVQEGIVAGGGVALIRAVTGLENVQVENEDQKTGLEIIRRALEEPLRQIVANTGTVDGSVVVMKVKEGKDDFGFNARTETFENMIAAGVIDPTMVTRTALENAASVAGLLLTTEAVISEKPEDEKMPPMPPGGGMGGMGGMGGMY</sequence>
<comment type="function">
    <text evidence="1">Together with its co-chaperonin GroES, plays an essential role in assisting protein folding. The GroEL-GroES system forms a nano-cage that allows encapsulation of the non-native substrate proteins and provides a physical environment optimized to promote and accelerate protein folding.</text>
</comment>
<comment type="catalytic activity">
    <reaction evidence="1">
        <text>ATP + H2O + a folded polypeptide = ADP + phosphate + an unfolded polypeptide.</text>
        <dbReference type="EC" id="5.6.1.7"/>
    </reaction>
</comment>
<comment type="subunit">
    <text evidence="1">Forms a cylinder of 14 subunits composed of two heptameric rings stacked back-to-back. Interacts with the co-chaperonin GroES.</text>
</comment>
<comment type="subcellular location">
    <subcellularLocation>
        <location evidence="1">Cytoplasm</location>
    </subcellularLocation>
</comment>
<comment type="similarity">
    <text evidence="1">Belongs to the chaperonin (HSP60) family.</text>
</comment>
<keyword id="KW-0067">ATP-binding</keyword>
<keyword id="KW-0143">Chaperone</keyword>
<keyword id="KW-0963">Cytoplasm</keyword>
<keyword id="KW-0413">Isomerase</keyword>
<keyword id="KW-0547">Nucleotide-binding</keyword>
<keyword id="KW-1185">Reference proteome</keyword>
<evidence type="ECO:0000255" key="1">
    <source>
        <dbReference type="HAMAP-Rule" id="MF_00600"/>
    </source>
</evidence>
<evidence type="ECO:0000256" key="2">
    <source>
        <dbReference type="SAM" id="MobiDB-lite"/>
    </source>
</evidence>
<gene>
    <name evidence="1" type="primary">groEL</name>
    <name evidence="1" type="synonym">groL</name>
    <name type="ordered locus">Ctha_1618</name>
</gene>
<name>CH60_CHLT3</name>
<protein>
    <recommendedName>
        <fullName evidence="1">Chaperonin GroEL</fullName>
        <ecNumber evidence="1">5.6.1.7</ecNumber>
    </recommendedName>
    <alternativeName>
        <fullName evidence="1">60 kDa chaperonin</fullName>
    </alternativeName>
    <alternativeName>
        <fullName evidence="1">Chaperonin-60</fullName>
        <shortName evidence="1">Cpn60</shortName>
    </alternativeName>
</protein>
<proteinExistence type="inferred from homology"/>
<organism>
    <name type="scientific">Chloroherpeton thalassium (strain ATCC 35110 / GB-78)</name>
    <dbReference type="NCBI Taxonomy" id="517418"/>
    <lineage>
        <taxon>Bacteria</taxon>
        <taxon>Pseudomonadati</taxon>
        <taxon>Chlorobiota</taxon>
        <taxon>Chlorobiia</taxon>
        <taxon>Chlorobiales</taxon>
        <taxon>Chloroherpetonaceae</taxon>
        <taxon>Chloroherpeton</taxon>
    </lineage>
</organism>